<reference key="1">
    <citation type="journal article" date="2007" name="Nat. Biotechnol.">
        <title>Comparative analysis of the complete genome sequence of the plant growth-promoting bacterium Bacillus amyloliquefaciens FZB42.</title>
        <authorList>
            <person name="Chen X.H."/>
            <person name="Koumoutsi A."/>
            <person name="Scholz R."/>
            <person name="Eisenreich A."/>
            <person name="Schneider K."/>
            <person name="Heinemeyer I."/>
            <person name="Morgenstern B."/>
            <person name="Voss B."/>
            <person name="Hess W.R."/>
            <person name="Reva O."/>
            <person name="Junge H."/>
            <person name="Voigt B."/>
            <person name="Jungblut P.R."/>
            <person name="Vater J."/>
            <person name="Suessmuth R."/>
            <person name="Liesegang H."/>
            <person name="Strittmatter A."/>
            <person name="Gottschalk G."/>
            <person name="Borriss R."/>
        </authorList>
    </citation>
    <scope>NUCLEOTIDE SEQUENCE [LARGE SCALE GENOMIC DNA]</scope>
    <source>
        <strain>DSM 23117 / BGSC 10A6 / LMG 26770 / FZB42</strain>
    </source>
</reference>
<keyword id="KW-0068">Autocatalytic cleavage</keyword>
<keyword id="KW-0963">Cytoplasm</keyword>
<keyword id="KW-0210">Decarboxylase</keyword>
<keyword id="KW-0456">Lyase</keyword>
<keyword id="KW-0566">Pantothenate biosynthesis</keyword>
<keyword id="KW-0670">Pyruvate</keyword>
<keyword id="KW-0704">Schiff base</keyword>
<keyword id="KW-0865">Zymogen</keyword>
<gene>
    <name evidence="1" type="primary">panD</name>
    <name type="ordered locus">RBAM_020560</name>
</gene>
<proteinExistence type="inferred from homology"/>
<organism>
    <name type="scientific">Bacillus velezensis (strain DSM 23117 / BGSC 10A6 / LMG 26770 / FZB42)</name>
    <name type="common">Bacillus amyloliquefaciens subsp. plantarum</name>
    <dbReference type="NCBI Taxonomy" id="326423"/>
    <lineage>
        <taxon>Bacteria</taxon>
        <taxon>Bacillati</taxon>
        <taxon>Bacillota</taxon>
        <taxon>Bacilli</taxon>
        <taxon>Bacillales</taxon>
        <taxon>Bacillaceae</taxon>
        <taxon>Bacillus</taxon>
        <taxon>Bacillus amyloliquefaciens group</taxon>
    </lineage>
</organism>
<evidence type="ECO:0000255" key="1">
    <source>
        <dbReference type="HAMAP-Rule" id="MF_00446"/>
    </source>
</evidence>
<comment type="function">
    <text evidence="1">Catalyzes the pyruvoyl-dependent decarboxylation of aspartate to produce beta-alanine.</text>
</comment>
<comment type="catalytic activity">
    <reaction evidence="1">
        <text>L-aspartate + H(+) = beta-alanine + CO2</text>
        <dbReference type="Rhea" id="RHEA:19497"/>
        <dbReference type="ChEBI" id="CHEBI:15378"/>
        <dbReference type="ChEBI" id="CHEBI:16526"/>
        <dbReference type="ChEBI" id="CHEBI:29991"/>
        <dbReference type="ChEBI" id="CHEBI:57966"/>
        <dbReference type="EC" id="4.1.1.11"/>
    </reaction>
</comment>
<comment type="cofactor">
    <cofactor evidence="1">
        <name>pyruvate</name>
        <dbReference type="ChEBI" id="CHEBI:15361"/>
    </cofactor>
    <text evidence="1">Binds 1 pyruvoyl group covalently per subunit.</text>
</comment>
<comment type="pathway">
    <text evidence="1">Cofactor biosynthesis; (R)-pantothenate biosynthesis; beta-alanine from L-aspartate: step 1/1.</text>
</comment>
<comment type="subunit">
    <text evidence="1">Heterooctamer of four alpha and four beta subunits.</text>
</comment>
<comment type="subcellular location">
    <subcellularLocation>
        <location evidence="1">Cytoplasm</location>
    </subcellularLocation>
</comment>
<comment type="PTM">
    <text evidence="1">Is synthesized initially as an inactive proenzyme, which is activated by self-cleavage at a specific serine bond to produce a beta-subunit with a hydroxyl group at its C-terminus and an alpha-subunit with a pyruvoyl group at its N-terminus.</text>
</comment>
<comment type="similarity">
    <text evidence="1">Belongs to the PanD family.</text>
</comment>
<sequence length="127" mass="13910">MYRTMMAGKLHRATVTEANLNYVGSITIDEDLLDAVGMLANEKVQIVNNNNGARLETYIIPGKRGSGVICLNGAAARLVQEGDKVIIISYQMMSDQEAKSHQPKVAVLDDQNKIEQMLGQEPAHTIL</sequence>
<dbReference type="EC" id="4.1.1.11" evidence="1"/>
<dbReference type="EMBL" id="CP000560">
    <property type="protein sequence ID" value="ABS74418.1"/>
    <property type="molecule type" value="Genomic_DNA"/>
</dbReference>
<dbReference type="RefSeq" id="WP_003153510.1">
    <property type="nucleotide sequence ID" value="NC_009725.2"/>
</dbReference>
<dbReference type="SMR" id="A7Z5Z2"/>
<dbReference type="GeneID" id="93081191"/>
<dbReference type="KEGG" id="bay:RBAM_020560"/>
<dbReference type="HOGENOM" id="CLU_115305_2_0_9"/>
<dbReference type="UniPathway" id="UPA00028">
    <property type="reaction ID" value="UER00002"/>
</dbReference>
<dbReference type="Proteomes" id="UP000001120">
    <property type="component" value="Chromosome"/>
</dbReference>
<dbReference type="GO" id="GO:0005829">
    <property type="term" value="C:cytosol"/>
    <property type="evidence" value="ECO:0007669"/>
    <property type="project" value="TreeGrafter"/>
</dbReference>
<dbReference type="GO" id="GO:0004068">
    <property type="term" value="F:aspartate 1-decarboxylase activity"/>
    <property type="evidence" value="ECO:0007669"/>
    <property type="project" value="UniProtKB-UniRule"/>
</dbReference>
<dbReference type="GO" id="GO:0006523">
    <property type="term" value="P:alanine biosynthetic process"/>
    <property type="evidence" value="ECO:0007669"/>
    <property type="project" value="InterPro"/>
</dbReference>
<dbReference type="GO" id="GO:0015940">
    <property type="term" value="P:pantothenate biosynthetic process"/>
    <property type="evidence" value="ECO:0007669"/>
    <property type="project" value="UniProtKB-UniRule"/>
</dbReference>
<dbReference type="CDD" id="cd06919">
    <property type="entry name" value="Asp_decarbox"/>
    <property type="match status" value="1"/>
</dbReference>
<dbReference type="Gene3D" id="2.40.40.20">
    <property type="match status" value="1"/>
</dbReference>
<dbReference type="HAMAP" id="MF_00446">
    <property type="entry name" value="PanD"/>
    <property type="match status" value="1"/>
</dbReference>
<dbReference type="InterPro" id="IPR009010">
    <property type="entry name" value="Asp_de-COase-like_dom_sf"/>
</dbReference>
<dbReference type="InterPro" id="IPR003190">
    <property type="entry name" value="Asp_decarbox"/>
</dbReference>
<dbReference type="NCBIfam" id="TIGR00223">
    <property type="entry name" value="panD"/>
    <property type="match status" value="1"/>
</dbReference>
<dbReference type="PANTHER" id="PTHR21012">
    <property type="entry name" value="ASPARTATE 1-DECARBOXYLASE"/>
    <property type="match status" value="1"/>
</dbReference>
<dbReference type="PANTHER" id="PTHR21012:SF0">
    <property type="entry name" value="ASPARTATE 1-DECARBOXYLASE"/>
    <property type="match status" value="1"/>
</dbReference>
<dbReference type="Pfam" id="PF02261">
    <property type="entry name" value="Asp_decarbox"/>
    <property type="match status" value="1"/>
</dbReference>
<dbReference type="PIRSF" id="PIRSF006246">
    <property type="entry name" value="Asp_decarbox"/>
    <property type="match status" value="1"/>
</dbReference>
<dbReference type="SUPFAM" id="SSF50692">
    <property type="entry name" value="ADC-like"/>
    <property type="match status" value="1"/>
</dbReference>
<feature type="chain" id="PRO_1000026159" description="Aspartate 1-decarboxylase beta chain" evidence="1">
    <location>
        <begin position="1"/>
        <end position="24"/>
    </location>
</feature>
<feature type="chain" id="PRO_0000316050" description="Aspartate 1-decarboxylase alpha chain" evidence="1">
    <location>
        <begin position="25"/>
        <end position="127"/>
    </location>
</feature>
<feature type="active site" description="Schiff-base intermediate with substrate; via pyruvic acid" evidence="1">
    <location>
        <position position="25"/>
    </location>
</feature>
<feature type="active site" description="Proton donor" evidence="1">
    <location>
        <position position="58"/>
    </location>
</feature>
<feature type="binding site" evidence="1">
    <location>
        <position position="57"/>
    </location>
    <ligand>
        <name>substrate</name>
    </ligand>
</feature>
<feature type="binding site" evidence="1">
    <location>
        <begin position="73"/>
        <end position="75"/>
    </location>
    <ligand>
        <name>substrate</name>
    </ligand>
</feature>
<feature type="modified residue" description="Pyruvic acid (Ser)" evidence="1">
    <location>
        <position position="25"/>
    </location>
</feature>
<accession>A7Z5Z2</accession>
<protein>
    <recommendedName>
        <fullName evidence="1">Aspartate 1-decarboxylase</fullName>
        <ecNumber evidence="1">4.1.1.11</ecNumber>
    </recommendedName>
    <alternativeName>
        <fullName evidence="1">Aspartate alpha-decarboxylase</fullName>
    </alternativeName>
    <component>
        <recommendedName>
            <fullName evidence="1">Aspartate 1-decarboxylase beta chain</fullName>
        </recommendedName>
    </component>
    <component>
        <recommendedName>
            <fullName evidence="1">Aspartate 1-decarboxylase alpha chain</fullName>
        </recommendedName>
    </component>
</protein>
<name>PAND_BACVZ</name>